<dbReference type="EMBL" id="CP000360">
    <property type="protein sequence ID" value="ABF43505.1"/>
    <property type="molecule type" value="Genomic_DNA"/>
</dbReference>
<dbReference type="RefSeq" id="WP_011525302.1">
    <property type="nucleotide sequence ID" value="NC_008009.1"/>
</dbReference>
<dbReference type="SMR" id="Q1IHZ5"/>
<dbReference type="STRING" id="204669.Acid345_4505"/>
<dbReference type="EnsemblBacteria" id="ABF43505">
    <property type="protein sequence ID" value="ABF43505"/>
    <property type="gene ID" value="Acid345_4505"/>
</dbReference>
<dbReference type="KEGG" id="aba:Acid345_4505"/>
<dbReference type="eggNOG" id="COG0236">
    <property type="taxonomic scope" value="Bacteria"/>
</dbReference>
<dbReference type="HOGENOM" id="CLU_108696_5_1_0"/>
<dbReference type="OrthoDB" id="9804551at2"/>
<dbReference type="UniPathway" id="UPA00094"/>
<dbReference type="Proteomes" id="UP000002432">
    <property type="component" value="Chromosome"/>
</dbReference>
<dbReference type="GO" id="GO:0005829">
    <property type="term" value="C:cytosol"/>
    <property type="evidence" value="ECO:0007669"/>
    <property type="project" value="TreeGrafter"/>
</dbReference>
<dbReference type="GO" id="GO:0016020">
    <property type="term" value="C:membrane"/>
    <property type="evidence" value="ECO:0007669"/>
    <property type="project" value="GOC"/>
</dbReference>
<dbReference type="GO" id="GO:0000035">
    <property type="term" value="F:acyl binding"/>
    <property type="evidence" value="ECO:0007669"/>
    <property type="project" value="TreeGrafter"/>
</dbReference>
<dbReference type="GO" id="GO:0000036">
    <property type="term" value="F:acyl carrier activity"/>
    <property type="evidence" value="ECO:0007669"/>
    <property type="project" value="UniProtKB-UniRule"/>
</dbReference>
<dbReference type="GO" id="GO:0031177">
    <property type="term" value="F:phosphopantetheine binding"/>
    <property type="evidence" value="ECO:0007669"/>
    <property type="project" value="InterPro"/>
</dbReference>
<dbReference type="GO" id="GO:0009245">
    <property type="term" value="P:lipid A biosynthetic process"/>
    <property type="evidence" value="ECO:0007669"/>
    <property type="project" value="TreeGrafter"/>
</dbReference>
<dbReference type="FunFam" id="1.10.1200.10:FF:000001">
    <property type="entry name" value="Acyl carrier protein"/>
    <property type="match status" value="1"/>
</dbReference>
<dbReference type="Gene3D" id="1.10.1200.10">
    <property type="entry name" value="ACP-like"/>
    <property type="match status" value="1"/>
</dbReference>
<dbReference type="HAMAP" id="MF_01217">
    <property type="entry name" value="Acyl_carrier"/>
    <property type="match status" value="1"/>
</dbReference>
<dbReference type="InterPro" id="IPR003231">
    <property type="entry name" value="ACP"/>
</dbReference>
<dbReference type="InterPro" id="IPR036736">
    <property type="entry name" value="ACP-like_sf"/>
</dbReference>
<dbReference type="InterPro" id="IPR020806">
    <property type="entry name" value="PKS_PP-bd"/>
</dbReference>
<dbReference type="InterPro" id="IPR009081">
    <property type="entry name" value="PP-bd_ACP"/>
</dbReference>
<dbReference type="InterPro" id="IPR006162">
    <property type="entry name" value="Ppantetheine_attach_site"/>
</dbReference>
<dbReference type="NCBIfam" id="TIGR00517">
    <property type="entry name" value="acyl_carrier"/>
    <property type="match status" value="1"/>
</dbReference>
<dbReference type="NCBIfam" id="NF002148">
    <property type="entry name" value="PRK00982.1-2"/>
    <property type="match status" value="1"/>
</dbReference>
<dbReference type="NCBIfam" id="NF002149">
    <property type="entry name" value="PRK00982.1-3"/>
    <property type="match status" value="1"/>
</dbReference>
<dbReference type="NCBIfam" id="NF002150">
    <property type="entry name" value="PRK00982.1-4"/>
    <property type="match status" value="1"/>
</dbReference>
<dbReference type="NCBIfam" id="NF002151">
    <property type="entry name" value="PRK00982.1-5"/>
    <property type="match status" value="1"/>
</dbReference>
<dbReference type="PANTHER" id="PTHR20863">
    <property type="entry name" value="ACYL CARRIER PROTEIN"/>
    <property type="match status" value="1"/>
</dbReference>
<dbReference type="PANTHER" id="PTHR20863:SF76">
    <property type="entry name" value="CARRIER DOMAIN-CONTAINING PROTEIN"/>
    <property type="match status" value="1"/>
</dbReference>
<dbReference type="Pfam" id="PF00550">
    <property type="entry name" value="PP-binding"/>
    <property type="match status" value="1"/>
</dbReference>
<dbReference type="SMART" id="SM00823">
    <property type="entry name" value="PKS_PP"/>
    <property type="match status" value="1"/>
</dbReference>
<dbReference type="SUPFAM" id="SSF47336">
    <property type="entry name" value="ACP-like"/>
    <property type="match status" value="1"/>
</dbReference>
<dbReference type="PROSITE" id="PS50075">
    <property type="entry name" value="CARRIER"/>
    <property type="match status" value="1"/>
</dbReference>
<dbReference type="PROSITE" id="PS00012">
    <property type="entry name" value="PHOSPHOPANTETHEINE"/>
    <property type="match status" value="1"/>
</dbReference>
<feature type="chain" id="PRO_1000066540" description="Acyl carrier protein">
    <location>
        <begin position="1"/>
        <end position="81"/>
    </location>
</feature>
<feature type="domain" description="Carrier" evidence="2">
    <location>
        <begin position="2"/>
        <end position="77"/>
    </location>
</feature>
<feature type="modified residue" description="O-(pantetheine 4'-phosphoryl)serine" evidence="2">
    <location>
        <position position="37"/>
    </location>
</feature>
<reference key="1">
    <citation type="journal article" date="2009" name="Appl. Environ. Microbiol.">
        <title>Three genomes from the phylum Acidobacteria provide insight into the lifestyles of these microorganisms in soils.</title>
        <authorList>
            <person name="Ward N.L."/>
            <person name="Challacombe J.F."/>
            <person name="Janssen P.H."/>
            <person name="Henrissat B."/>
            <person name="Coutinho P.M."/>
            <person name="Wu M."/>
            <person name="Xie G."/>
            <person name="Haft D.H."/>
            <person name="Sait M."/>
            <person name="Badger J."/>
            <person name="Barabote R.D."/>
            <person name="Bradley B."/>
            <person name="Brettin T.S."/>
            <person name="Brinkac L.M."/>
            <person name="Bruce D."/>
            <person name="Creasy T."/>
            <person name="Daugherty S.C."/>
            <person name="Davidsen T.M."/>
            <person name="DeBoy R.T."/>
            <person name="Detter J.C."/>
            <person name="Dodson R.J."/>
            <person name="Durkin A.S."/>
            <person name="Ganapathy A."/>
            <person name="Gwinn-Giglio M."/>
            <person name="Han C.S."/>
            <person name="Khouri H."/>
            <person name="Kiss H."/>
            <person name="Kothari S.P."/>
            <person name="Madupu R."/>
            <person name="Nelson K.E."/>
            <person name="Nelson W.C."/>
            <person name="Paulsen I."/>
            <person name="Penn K."/>
            <person name="Ren Q."/>
            <person name="Rosovitz M.J."/>
            <person name="Selengut J.D."/>
            <person name="Shrivastava S."/>
            <person name="Sullivan S.A."/>
            <person name="Tapia R."/>
            <person name="Thompson L.S."/>
            <person name="Watkins K.L."/>
            <person name="Yang Q."/>
            <person name="Yu C."/>
            <person name="Zafar N."/>
            <person name="Zhou L."/>
            <person name="Kuske C.R."/>
        </authorList>
    </citation>
    <scope>NUCLEOTIDE SEQUENCE [LARGE SCALE GENOMIC DNA]</scope>
    <source>
        <strain>Ellin345</strain>
    </source>
</reference>
<evidence type="ECO:0000255" key="1">
    <source>
        <dbReference type="HAMAP-Rule" id="MF_01217"/>
    </source>
</evidence>
<evidence type="ECO:0000255" key="2">
    <source>
        <dbReference type="PROSITE-ProRule" id="PRU00258"/>
    </source>
</evidence>
<organism>
    <name type="scientific">Koribacter versatilis (strain Ellin345)</name>
    <dbReference type="NCBI Taxonomy" id="204669"/>
    <lineage>
        <taxon>Bacteria</taxon>
        <taxon>Pseudomonadati</taxon>
        <taxon>Acidobacteriota</taxon>
        <taxon>Terriglobia</taxon>
        <taxon>Terriglobales</taxon>
        <taxon>Candidatus Korobacteraceae</taxon>
        <taxon>Candidatus Korobacter</taxon>
    </lineage>
</organism>
<comment type="function">
    <text evidence="1">Carrier of the growing fatty acid chain in fatty acid biosynthesis.</text>
</comment>
<comment type="pathway">
    <text evidence="1">Lipid metabolism; fatty acid biosynthesis.</text>
</comment>
<comment type="subcellular location">
    <subcellularLocation>
        <location evidence="1">Cytoplasm</location>
    </subcellularLocation>
</comment>
<comment type="PTM">
    <text evidence="1">4'-phosphopantetheine is transferred from CoA to a specific serine of apo-ACP by AcpS. This modification is essential for activity because fatty acids are bound in thioester linkage to the sulfhydryl of the prosthetic group.</text>
</comment>
<comment type="similarity">
    <text evidence="1">Belongs to the acyl carrier protein (ACP) family.</text>
</comment>
<sequence>MASVEEKVKQIIVEQLGVDEGEVTPNASFVDDLGADSLDTVELVMAFEEAFEIEIPDEDAEKIRTVKDAVDYITAHAKGGK</sequence>
<proteinExistence type="inferred from homology"/>
<gene>
    <name evidence="1" type="primary">acpP</name>
    <name type="ordered locus">Acid345_4505</name>
</gene>
<protein>
    <recommendedName>
        <fullName evidence="1">Acyl carrier protein</fullName>
        <shortName evidence="1">ACP</shortName>
    </recommendedName>
</protein>
<accession>Q1IHZ5</accession>
<name>ACP_KORVE</name>
<keyword id="KW-0963">Cytoplasm</keyword>
<keyword id="KW-0275">Fatty acid biosynthesis</keyword>
<keyword id="KW-0276">Fatty acid metabolism</keyword>
<keyword id="KW-0444">Lipid biosynthesis</keyword>
<keyword id="KW-0443">Lipid metabolism</keyword>
<keyword id="KW-0596">Phosphopantetheine</keyword>
<keyword id="KW-0597">Phosphoprotein</keyword>
<keyword id="KW-1185">Reference proteome</keyword>